<organism>
    <name type="scientific">Staphylococcus aureus (strain N315)</name>
    <dbReference type="NCBI Taxonomy" id="158879"/>
    <lineage>
        <taxon>Bacteria</taxon>
        <taxon>Bacillati</taxon>
        <taxon>Bacillota</taxon>
        <taxon>Bacilli</taxon>
        <taxon>Bacillales</taxon>
        <taxon>Staphylococcaceae</taxon>
        <taxon>Staphylococcus</taxon>
    </lineage>
</organism>
<comment type="subcellular location">
    <subcellularLocation>
        <location evidence="1">Secreted</location>
    </subcellularLocation>
</comment>
<comment type="similarity">
    <text evidence="2">Belongs to the peptidase S1B family.</text>
</comment>
<sequence length="239" mass="26099">MNKNIVIKSMAALAILTSVTGINAAVVEETQQIANAEKNVTQVKDTNNFPYNGVVSFKDATGFVIGKNTIITNKHVSKDYKVGDRITAHPNGDKGNGGIYKIKSISDYPGDEDISVMNIEEQAVERGPKGFNFNENVQAFNFAKDAKVDDKIKVIGYPLPAQNSFKQFESTGTIKRIKDNILNFDAYIEPGNSGSPVLNSNNEVIGVVYGGIGKIGSEYNGAVYFTPQIKDFIQKHIEQ</sequence>
<accession>Q7A4Y2</accession>
<evidence type="ECO:0000250" key="1"/>
<evidence type="ECO:0000305" key="2"/>
<name>SPLC_STAAN</name>
<feature type="signal peptide" evidence="1">
    <location>
        <begin position="1"/>
        <end position="36"/>
    </location>
</feature>
<feature type="chain" id="PRO_0000359559" description="Serine protease SplC">
    <location>
        <begin position="37"/>
        <end position="239"/>
    </location>
</feature>
<feature type="active site" description="Charge relay system" evidence="1">
    <location>
        <position position="75"/>
    </location>
</feature>
<feature type="active site" description="Charge relay system" evidence="1">
    <location>
        <position position="113"/>
    </location>
</feature>
<feature type="active site" description="Charge relay system" evidence="1">
    <location>
        <position position="193"/>
    </location>
</feature>
<protein>
    <recommendedName>
        <fullName>Serine protease SplC</fullName>
        <ecNumber>3.4.21.-</ecNumber>
    </recommendedName>
</protein>
<gene>
    <name type="primary">splC</name>
    <name type="ordered locus">SA1629</name>
</gene>
<dbReference type="EC" id="3.4.21.-"/>
<dbReference type="EMBL" id="BA000018">
    <property type="protein sequence ID" value="BAB42897.1"/>
    <property type="molecule type" value="Genomic_DNA"/>
</dbReference>
<dbReference type="PIR" id="B89967">
    <property type="entry name" value="B89967"/>
</dbReference>
<dbReference type="RefSeq" id="WP_001038872.1">
    <property type="nucleotide sequence ID" value="NC_002745.2"/>
</dbReference>
<dbReference type="SMR" id="Q7A4Y2"/>
<dbReference type="MEROPS" id="S01.283"/>
<dbReference type="EnsemblBacteria" id="BAB42897">
    <property type="protein sequence ID" value="BAB42897"/>
    <property type="gene ID" value="BAB42897"/>
</dbReference>
<dbReference type="KEGG" id="sau:SA1629"/>
<dbReference type="HOGENOM" id="CLU_073589_2_0_9"/>
<dbReference type="GO" id="GO:0005576">
    <property type="term" value="C:extracellular region"/>
    <property type="evidence" value="ECO:0007669"/>
    <property type="project" value="UniProtKB-SubCell"/>
</dbReference>
<dbReference type="GO" id="GO:0004252">
    <property type="term" value="F:serine-type endopeptidase activity"/>
    <property type="evidence" value="ECO:0007669"/>
    <property type="project" value="InterPro"/>
</dbReference>
<dbReference type="GO" id="GO:0006508">
    <property type="term" value="P:proteolysis"/>
    <property type="evidence" value="ECO:0007669"/>
    <property type="project" value="UniProtKB-KW"/>
</dbReference>
<dbReference type="Gene3D" id="2.40.10.10">
    <property type="entry name" value="Trypsin-like serine proteases"/>
    <property type="match status" value="2"/>
</dbReference>
<dbReference type="InterPro" id="IPR009003">
    <property type="entry name" value="Peptidase_S1_PA"/>
</dbReference>
<dbReference type="InterPro" id="IPR043504">
    <property type="entry name" value="Peptidase_S1_PA_chymotrypsin"/>
</dbReference>
<dbReference type="InterPro" id="IPR008256">
    <property type="entry name" value="Peptidase_S1B"/>
</dbReference>
<dbReference type="InterPro" id="IPR008353">
    <property type="entry name" value="Peptidase_S1B_tx"/>
</dbReference>
<dbReference type="InterPro" id="IPR001254">
    <property type="entry name" value="Trypsin_dom"/>
</dbReference>
<dbReference type="InterPro" id="IPR028301">
    <property type="entry name" value="V8_his_AS"/>
</dbReference>
<dbReference type="PANTHER" id="PTHR43019:SF23">
    <property type="entry name" value="PROTEASE DO-LIKE 5, CHLOROPLASTIC"/>
    <property type="match status" value="1"/>
</dbReference>
<dbReference type="PANTHER" id="PTHR43019">
    <property type="entry name" value="SERINE ENDOPROTEASE DEGS"/>
    <property type="match status" value="1"/>
</dbReference>
<dbReference type="Pfam" id="PF00089">
    <property type="entry name" value="Trypsin"/>
    <property type="match status" value="1"/>
</dbReference>
<dbReference type="PRINTS" id="PR01774">
    <property type="entry name" value="EXFOLTOXIN"/>
</dbReference>
<dbReference type="PRINTS" id="PR00839">
    <property type="entry name" value="V8PROTEASE"/>
</dbReference>
<dbReference type="SUPFAM" id="SSF50494">
    <property type="entry name" value="Trypsin-like serine proteases"/>
    <property type="match status" value="1"/>
</dbReference>
<dbReference type="PROSITE" id="PS00672">
    <property type="entry name" value="V8_HIS"/>
    <property type="match status" value="1"/>
</dbReference>
<proteinExistence type="inferred from homology"/>
<reference key="1">
    <citation type="journal article" date="2001" name="Lancet">
        <title>Whole genome sequencing of meticillin-resistant Staphylococcus aureus.</title>
        <authorList>
            <person name="Kuroda M."/>
            <person name="Ohta T."/>
            <person name="Uchiyama I."/>
            <person name="Baba T."/>
            <person name="Yuzawa H."/>
            <person name="Kobayashi I."/>
            <person name="Cui L."/>
            <person name="Oguchi A."/>
            <person name="Aoki K."/>
            <person name="Nagai Y."/>
            <person name="Lian J.-Q."/>
            <person name="Ito T."/>
            <person name="Kanamori M."/>
            <person name="Matsumaru H."/>
            <person name="Maruyama A."/>
            <person name="Murakami H."/>
            <person name="Hosoyama A."/>
            <person name="Mizutani-Ui Y."/>
            <person name="Takahashi N.K."/>
            <person name="Sawano T."/>
            <person name="Inoue R."/>
            <person name="Kaito C."/>
            <person name="Sekimizu K."/>
            <person name="Hirakawa H."/>
            <person name="Kuhara S."/>
            <person name="Goto S."/>
            <person name="Yabuzaki J."/>
            <person name="Kanehisa M."/>
            <person name="Yamashita A."/>
            <person name="Oshima K."/>
            <person name="Furuya K."/>
            <person name="Yoshino C."/>
            <person name="Shiba T."/>
            <person name="Hattori M."/>
            <person name="Ogasawara N."/>
            <person name="Hayashi H."/>
            <person name="Hiramatsu K."/>
        </authorList>
    </citation>
    <scope>NUCLEOTIDE SEQUENCE [LARGE SCALE GENOMIC DNA]</scope>
    <source>
        <strain>N315</strain>
    </source>
</reference>
<keyword id="KW-0378">Hydrolase</keyword>
<keyword id="KW-0645">Protease</keyword>
<keyword id="KW-0964">Secreted</keyword>
<keyword id="KW-0720">Serine protease</keyword>
<keyword id="KW-0732">Signal</keyword>